<protein>
    <recommendedName>
        <fullName>Endogenous retrovirus group K member 6 Pro protein</fullName>
    </recommendedName>
    <alternativeName>
        <fullName>HERV-K(C7) Pro protein</fullName>
    </alternativeName>
    <alternativeName>
        <fullName>HERV-K(HML-2.HOM) Pro protein</fullName>
    </alternativeName>
    <alternativeName>
        <fullName>HERV-K108 Pro protein</fullName>
    </alternativeName>
    <alternativeName>
        <fullName>HERV-K_7p22.1 provirus ancestral Pro protein</fullName>
        <ecNumber>3.4.23.50</ecNumber>
    </alternativeName>
    <alternativeName>
        <fullName>Protease</fullName>
    </alternativeName>
    <alternativeName>
        <fullName>Proteinase</fullName>
        <shortName>PR</shortName>
    </alternativeName>
</protein>
<proteinExistence type="inferred from homology"/>
<comment type="function">
    <text>Retroviral proteases have roles in the processing of the primary translation products and the maturation of the viral particle. Endogenous Pro proteins may have kept, lost or modified their original function during evolution.</text>
</comment>
<comment type="catalytic activity">
    <reaction>
        <text>Processing at the authentic HIV-1 PR recognition site and release of the mature p17 matrix and the p24 capsid protein, as a result of the cleavage of the -SQNY-|-PIVQ- cleavage site.</text>
        <dbReference type="EC" id="3.4.23.50"/>
    </reaction>
</comment>
<comment type="subunit">
    <text evidence="1">Active as a homodimer.</text>
</comment>
<comment type="alternative products">
    <event type="ribosomal frameshifting"/>
    <isoform>
        <id>Q9Y6I0-1</id>
        <name>1</name>
        <sequence type="displayed"/>
    </isoform>
    <text>This protein is synthesized as Gag-Pro and Gag-Pro-Pol polyprotein. These polyproteins are thought, by similarity with type-B retroviruses, to be generated by -1 frameshifts occurring at the Gag-Pro and Pro-Pol genes boundaries.</text>
</comment>
<comment type="PTM">
    <text evidence="1">Autoproteolytically processed at the N-terminus. Expected C-terminal autoprocessing not detected. The sequence shown is that of the processed Pro protein (By similarity).</text>
</comment>
<comment type="miscellaneous">
    <text>Two human-specific proviruses are inserted as tandem repeats with a shared LTR in most individuals tested. The telomeric copy is referred here as 'provirus 41574'. The centromeric copy is referred here as 'provirus 41575'.</text>
</comment>
<comment type="similarity">
    <text evidence="5">Belongs to the peptidase A2 family. HERV class-II K(HML-2) subfamily.</text>
</comment>
<comment type="caution">
    <text evidence="5">Pro proteins of ERVK-6 tandem proviruses have been initially reported as being identical (AAF88166 and AAD21096). However, the same Pro proteins sequences, when translated from the human genome draft (AC072054), show one conflict with respect to each other.</text>
</comment>
<comment type="sequence caution" evidence="5">
    <conflict type="erroneous initiation">
        <sequence resource="EMBL-CDS" id="AAD21096"/>
    </conflict>
</comment>
<comment type="sequence caution" evidence="5">
    <conflict type="erroneous initiation">
        <sequence resource="EMBL-CDS" id="AAF88166"/>
    </conflict>
</comment>
<name>VPK6_HUMAN</name>
<accession>Q9Y6I0</accession>
<accession>Q9UKH5</accession>
<evidence type="ECO:0000250" key="1"/>
<evidence type="ECO:0000255" key="2">
    <source>
        <dbReference type="PROSITE-ProRule" id="PRU00092"/>
    </source>
</evidence>
<evidence type="ECO:0000255" key="3">
    <source>
        <dbReference type="PROSITE-ProRule" id="PRU00275"/>
    </source>
</evidence>
<evidence type="ECO:0000255" key="4">
    <source>
        <dbReference type="PROSITE-ProRule" id="PRU10094"/>
    </source>
</evidence>
<evidence type="ECO:0000305" key="5"/>
<reference key="1">
    <citation type="journal article" date="1999" name="Nat. Genet.">
        <title>An almost-intact human endogenous retrovirus K on human chromosome 7.</title>
        <authorList>
            <person name="Mayer J."/>
            <person name="Sauter M."/>
            <person name="Racz A."/>
            <person name="Scherer D."/>
            <person name="Mueller-Lantzsch N."/>
            <person name="Meese E.U."/>
        </authorList>
    </citation>
    <scope>NUCLEOTIDE SEQUENCE [GENOMIC DNA]</scope>
</reference>
<reference key="2">
    <citation type="journal article" date="1999" name="Curr. Biol.">
        <title>Many human endogenous retrovirus K (HERV-K) proviruses are unique to humans.</title>
        <authorList>
            <person name="Barbulescu M."/>
            <person name="Turner G."/>
            <person name="Seaman M.I."/>
            <person name="Deinard A.S."/>
            <person name="Kidd K.K."/>
            <person name="Lenz J."/>
        </authorList>
    </citation>
    <scope>NUCLEOTIDE SEQUENCE [GENOMIC DNA]</scope>
</reference>
<reference key="3">
    <citation type="journal article" date="2001" name="Genomics">
        <title>Genomic organization of the human endogenous retrovirus HERV-K(HML-2.HOM) (ERVK6) on chromosome 7.</title>
        <authorList>
            <person name="Reus K."/>
            <person name="Mayer J."/>
            <person name="Sauter M."/>
            <person name="Scherer D."/>
            <person name="Mueller-Lantzsch N."/>
            <person name="Meese E.U."/>
        </authorList>
    </citation>
    <scope>NUCLEOTIDE SEQUENCE [GENOMIC DNA]</scope>
</reference>
<reference key="4">
    <citation type="journal article" date="1999" name="J. Virol.">
        <title>Genome wide screening, cloning, chromosomal assignment and expression of full-length human endogenous retrovirus type K (HERV-K).</title>
        <authorList>
            <person name="Toenjes R.R."/>
            <person name="Czauderna F."/>
            <person name="Kurth R."/>
        </authorList>
    </citation>
    <scope>NUCLEOTIDE SEQUENCE [GENOMIC DNA]</scope>
</reference>
<reference key="5">
    <citation type="journal article" date="2003" name="Nature">
        <title>The DNA sequence of human chromosome 7.</title>
        <authorList>
            <person name="Hillier L.W."/>
            <person name="Fulton R.S."/>
            <person name="Fulton L.A."/>
            <person name="Graves T.A."/>
            <person name="Pepin K.H."/>
            <person name="Wagner-McPherson C."/>
            <person name="Layman D."/>
            <person name="Maas J."/>
            <person name="Jaeger S."/>
            <person name="Walker R."/>
            <person name="Wylie K."/>
            <person name="Sekhon M."/>
            <person name="Becker M.C."/>
            <person name="O'Laughlin M.D."/>
            <person name="Schaller M.E."/>
            <person name="Fewell G.A."/>
            <person name="Delehaunty K.D."/>
            <person name="Miner T.L."/>
            <person name="Nash W.E."/>
            <person name="Cordes M."/>
            <person name="Du H."/>
            <person name="Sun H."/>
            <person name="Edwards J."/>
            <person name="Bradshaw-Cordum H."/>
            <person name="Ali J."/>
            <person name="Andrews S."/>
            <person name="Isak A."/>
            <person name="Vanbrunt A."/>
            <person name="Nguyen C."/>
            <person name="Du F."/>
            <person name="Lamar B."/>
            <person name="Courtney L."/>
            <person name="Kalicki J."/>
            <person name="Ozersky P."/>
            <person name="Bielicki L."/>
            <person name="Scott K."/>
            <person name="Holmes A."/>
            <person name="Harkins R."/>
            <person name="Harris A."/>
            <person name="Strong C.M."/>
            <person name="Hou S."/>
            <person name="Tomlinson C."/>
            <person name="Dauphin-Kohlberg S."/>
            <person name="Kozlowicz-Reilly A."/>
            <person name="Leonard S."/>
            <person name="Rohlfing T."/>
            <person name="Rock S.M."/>
            <person name="Tin-Wollam A.-M."/>
            <person name="Abbott A."/>
            <person name="Minx P."/>
            <person name="Maupin R."/>
            <person name="Strowmatt C."/>
            <person name="Latreille P."/>
            <person name="Miller N."/>
            <person name="Johnson D."/>
            <person name="Murray J."/>
            <person name="Woessner J.P."/>
            <person name="Wendl M.C."/>
            <person name="Yang S.-P."/>
            <person name="Schultz B.R."/>
            <person name="Wallis J.W."/>
            <person name="Spieth J."/>
            <person name="Bieri T.A."/>
            <person name="Nelson J.O."/>
            <person name="Berkowicz N."/>
            <person name="Wohldmann P.E."/>
            <person name="Cook L.L."/>
            <person name="Hickenbotham M.T."/>
            <person name="Eldred J."/>
            <person name="Williams D."/>
            <person name="Bedell J.A."/>
            <person name="Mardis E.R."/>
            <person name="Clifton S.W."/>
            <person name="Chissoe S.L."/>
            <person name="Marra M.A."/>
            <person name="Raymond C."/>
            <person name="Haugen E."/>
            <person name="Gillett W."/>
            <person name="Zhou Y."/>
            <person name="James R."/>
            <person name="Phelps K."/>
            <person name="Iadanoto S."/>
            <person name="Bubb K."/>
            <person name="Simms E."/>
            <person name="Levy R."/>
            <person name="Clendenning J."/>
            <person name="Kaul R."/>
            <person name="Kent W.J."/>
            <person name="Furey T.S."/>
            <person name="Baertsch R.A."/>
            <person name="Brent M.R."/>
            <person name="Keibler E."/>
            <person name="Flicek P."/>
            <person name="Bork P."/>
            <person name="Suyama M."/>
            <person name="Bailey J.A."/>
            <person name="Portnoy M.E."/>
            <person name="Torrents D."/>
            <person name="Chinwalla A.T."/>
            <person name="Gish W.R."/>
            <person name="Eddy S.R."/>
            <person name="McPherson J.D."/>
            <person name="Olson M.V."/>
            <person name="Eichler E.E."/>
            <person name="Green E.D."/>
            <person name="Waterston R.H."/>
            <person name="Wilson R.K."/>
        </authorList>
    </citation>
    <scope>NUCLEOTIDE SEQUENCE [LARGE SCALE GENOMIC DNA]</scope>
</reference>
<sequence length="156" mass="16972">WASQVSENRPVCKAIIQGKQFEGLVDTGADVSIIALNQWPKNWPKQKAVTGLVGIGTASEVYQSTEILHCLGPDNQESTVQPMITSIPLNLWGRDLLQQWGAEITMPAPSYSPTSQKIMTKMGYIPGKGLGKNEDGIKIPVEAKINQEREGIGNPC</sequence>
<dbReference type="EC" id="3.4.23.50"/>
<dbReference type="EMBL" id="AF074086">
    <property type="protein sequence ID" value="AAD21096.1"/>
    <property type="status" value="ALT_INIT"/>
    <property type="molecule type" value="Genomic_DNA"/>
</dbReference>
<dbReference type="EMBL" id="AF074086">
    <property type="protein sequence ID" value="AAF88166.1"/>
    <property type="status" value="ALT_INIT"/>
    <property type="molecule type" value="Genomic_DNA"/>
</dbReference>
<dbReference type="EMBL" id="AF164614">
    <property type="protein sequence ID" value="AAD51797.1"/>
    <property type="status" value="ALT_SEQ"/>
    <property type="molecule type" value="Genomic_DNA"/>
</dbReference>
<dbReference type="EMBL" id="Y17832">
    <property type="status" value="NOT_ANNOTATED_CDS"/>
    <property type="molecule type" value="Genomic_DNA"/>
</dbReference>
<dbReference type="EMBL" id="Y17834">
    <property type="status" value="NOT_ANNOTATED_CDS"/>
    <property type="molecule type" value="Genomic_DNA"/>
</dbReference>
<dbReference type="EMBL" id="AC072054">
    <property type="status" value="NOT_ANNOTATED_CDS"/>
    <property type="molecule type" value="Genomic_DNA"/>
</dbReference>
<dbReference type="SMR" id="Q9Y6I0"/>
<dbReference type="MEROPS" id="A02.011"/>
<dbReference type="BioMuta" id="HGNC:13915"/>
<dbReference type="DMDM" id="52000882"/>
<dbReference type="AGR" id="HGNC:13915"/>
<dbReference type="GeneCards" id="ERVK-6"/>
<dbReference type="HGNC" id="HGNC:13915">
    <property type="gene designation" value="ERVK-6"/>
</dbReference>
<dbReference type="MIM" id="605626">
    <property type="type" value="gene"/>
</dbReference>
<dbReference type="neXtProt" id="NX_Q9Y6I0"/>
<dbReference type="PharmGKB" id="PA134987951"/>
<dbReference type="PhylomeDB" id="Q9Y6I0"/>
<dbReference type="Pharos" id="Q9Y6I0">
    <property type="development level" value="Tdark"/>
</dbReference>
<dbReference type="Proteomes" id="UP000005640">
    <property type="component" value="Unplaced"/>
</dbReference>
<dbReference type="GO" id="GO:0004190">
    <property type="term" value="F:aspartic-type endopeptidase activity"/>
    <property type="evidence" value="ECO:0007669"/>
    <property type="project" value="UniProtKB-KW"/>
</dbReference>
<dbReference type="GO" id="GO:0003676">
    <property type="term" value="F:nucleic acid binding"/>
    <property type="evidence" value="ECO:0007669"/>
    <property type="project" value="InterPro"/>
</dbReference>
<dbReference type="GO" id="GO:0006508">
    <property type="term" value="P:proteolysis"/>
    <property type="evidence" value="ECO:0007669"/>
    <property type="project" value="UniProtKB-KW"/>
</dbReference>
<dbReference type="GO" id="GO:0075523">
    <property type="term" value="P:viral translational frameshifting"/>
    <property type="evidence" value="ECO:0007669"/>
    <property type="project" value="UniProtKB-KW"/>
</dbReference>
<dbReference type="CDD" id="cd05482">
    <property type="entry name" value="HIV_retropepsin_like"/>
    <property type="match status" value="1"/>
</dbReference>
<dbReference type="Gene3D" id="2.40.70.10">
    <property type="entry name" value="Acid Proteases"/>
    <property type="match status" value="1"/>
</dbReference>
<dbReference type="InterPro" id="IPR001969">
    <property type="entry name" value="Aspartic_peptidase_AS"/>
</dbReference>
<dbReference type="InterPro" id="IPR000467">
    <property type="entry name" value="G_patch_dom"/>
</dbReference>
<dbReference type="InterPro" id="IPR051592">
    <property type="entry name" value="HERV-K_Pro_peptidase_A2"/>
</dbReference>
<dbReference type="InterPro" id="IPR001995">
    <property type="entry name" value="Peptidase_A2_cat"/>
</dbReference>
<dbReference type="InterPro" id="IPR021109">
    <property type="entry name" value="Peptidase_aspartic_dom_sf"/>
</dbReference>
<dbReference type="InterPro" id="IPR034170">
    <property type="entry name" value="Retropepsin-like_cat_dom"/>
</dbReference>
<dbReference type="InterPro" id="IPR018061">
    <property type="entry name" value="Retropepsins"/>
</dbReference>
<dbReference type="PANTHER" id="PTHR19422">
    <property type="entry name" value="GAG RETROVIRAL POLYPROTEIN"/>
    <property type="match status" value="1"/>
</dbReference>
<dbReference type="PANTHER" id="PTHR19422:SF123">
    <property type="entry name" value="RT1 CLASS I, LOCUS CE15"/>
    <property type="match status" value="1"/>
</dbReference>
<dbReference type="Pfam" id="PF01585">
    <property type="entry name" value="G-patch"/>
    <property type="match status" value="1"/>
</dbReference>
<dbReference type="Pfam" id="PF00077">
    <property type="entry name" value="RVP"/>
    <property type="match status" value="1"/>
</dbReference>
<dbReference type="SMART" id="SM00443">
    <property type="entry name" value="G_patch"/>
    <property type="match status" value="1"/>
</dbReference>
<dbReference type="SUPFAM" id="SSF50630">
    <property type="entry name" value="Acid proteases"/>
    <property type="match status" value="1"/>
</dbReference>
<dbReference type="PROSITE" id="PS50175">
    <property type="entry name" value="ASP_PROT_RETROV"/>
    <property type="match status" value="1"/>
</dbReference>
<dbReference type="PROSITE" id="PS00141">
    <property type="entry name" value="ASP_PROTEASE"/>
    <property type="match status" value="1"/>
</dbReference>
<dbReference type="PROSITE" id="PS50174">
    <property type="entry name" value="G_PATCH"/>
    <property type="match status" value="1"/>
</dbReference>
<gene>
    <name type="primary">ERVK-6</name>
    <name type="synonym">ERVK6</name>
</gene>
<organism>
    <name type="scientific">Homo sapiens</name>
    <name type="common">Human</name>
    <dbReference type="NCBI Taxonomy" id="9606"/>
    <lineage>
        <taxon>Eukaryota</taxon>
        <taxon>Metazoa</taxon>
        <taxon>Chordata</taxon>
        <taxon>Craniata</taxon>
        <taxon>Vertebrata</taxon>
        <taxon>Euteleostomi</taxon>
        <taxon>Mammalia</taxon>
        <taxon>Eutheria</taxon>
        <taxon>Euarchontoglires</taxon>
        <taxon>Primates</taxon>
        <taxon>Haplorrhini</taxon>
        <taxon>Catarrhini</taxon>
        <taxon>Hominidae</taxon>
        <taxon>Homo</taxon>
    </lineage>
</organism>
<feature type="chain" id="PRO_0000199537" description="Endogenous retrovirus group K member 6 Pro protein">
    <location>
        <begin position="1"/>
        <end position="156"/>
    </location>
</feature>
<feature type="domain" description="Peptidase A2" evidence="3">
    <location>
        <begin position="21"/>
        <end position="96"/>
    </location>
</feature>
<feature type="domain" description="G-patch" evidence="2">
    <location>
        <begin position="111"/>
        <end position="156"/>
    </location>
</feature>
<feature type="active site" evidence="4">
    <location>
        <position position="26"/>
    </location>
</feature>
<feature type="sequence conflict" description="In Ref. 5; in provirus 41574." evidence="5" ref="5">
    <original>K</original>
    <variation>T</variation>
    <location>
        <position position="121"/>
    </location>
</feature>
<keyword id="KW-0064">Aspartyl protease</keyword>
<keyword id="KW-0068">Autocatalytic cleavage</keyword>
<keyword id="KW-0895">ERV</keyword>
<keyword id="KW-0378">Hydrolase</keyword>
<keyword id="KW-0645">Protease</keyword>
<keyword id="KW-1185">Reference proteome</keyword>
<keyword id="KW-0688">Ribosomal frameshifting</keyword>
<keyword id="KW-0814">Transposable element</keyword>